<dbReference type="EC" id="3.1.1.-"/>
<dbReference type="EMBL" id="DQ274497">
    <property type="protein sequence ID" value="ABC55697.1"/>
    <property type="molecule type" value="mRNA"/>
</dbReference>
<dbReference type="SMR" id="Q2MY41"/>
<dbReference type="eggNOG" id="KOG0513">
    <property type="taxonomic scope" value="Eukaryota"/>
</dbReference>
<dbReference type="InParanoid" id="Q2MY41"/>
<dbReference type="Proteomes" id="UP000011115">
    <property type="component" value="Unassembled WGS sequence"/>
</dbReference>
<dbReference type="ExpressionAtlas" id="Q2MY41">
    <property type="expression patterns" value="baseline"/>
</dbReference>
<dbReference type="GO" id="GO:0005773">
    <property type="term" value="C:vacuole"/>
    <property type="evidence" value="ECO:0007669"/>
    <property type="project" value="UniProtKB-SubCell"/>
</dbReference>
<dbReference type="GO" id="GO:0047372">
    <property type="term" value="F:monoacylglycerol lipase activity"/>
    <property type="evidence" value="ECO:0000318"/>
    <property type="project" value="GO_Central"/>
</dbReference>
<dbReference type="GO" id="GO:0045735">
    <property type="term" value="F:nutrient reservoir activity"/>
    <property type="evidence" value="ECO:0007669"/>
    <property type="project" value="UniProtKB-KW"/>
</dbReference>
<dbReference type="GO" id="GO:0004620">
    <property type="term" value="F:phospholipase activity"/>
    <property type="evidence" value="ECO:0000318"/>
    <property type="project" value="GO_Central"/>
</dbReference>
<dbReference type="GO" id="GO:0006952">
    <property type="term" value="P:defense response"/>
    <property type="evidence" value="ECO:0007669"/>
    <property type="project" value="UniProtKB-KW"/>
</dbReference>
<dbReference type="GO" id="GO:0016042">
    <property type="term" value="P:lipid catabolic process"/>
    <property type="evidence" value="ECO:0007669"/>
    <property type="project" value="UniProtKB-KW"/>
</dbReference>
<dbReference type="Gene3D" id="3.40.1090.10">
    <property type="entry name" value="Cytosolic phospholipase A2 catalytic domain"/>
    <property type="match status" value="1"/>
</dbReference>
<dbReference type="InterPro" id="IPR016035">
    <property type="entry name" value="Acyl_Trfase/lysoPLipase"/>
</dbReference>
<dbReference type="InterPro" id="IPR002641">
    <property type="entry name" value="PNPLA_dom"/>
</dbReference>
<dbReference type="PANTHER" id="PTHR32176:SF85">
    <property type="entry name" value="PATATIN GROUP D-2"/>
    <property type="match status" value="1"/>
</dbReference>
<dbReference type="PANTHER" id="PTHR32176">
    <property type="entry name" value="XYLOSE ISOMERASE"/>
    <property type="match status" value="1"/>
</dbReference>
<dbReference type="Pfam" id="PF01734">
    <property type="entry name" value="Patatin"/>
    <property type="match status" value="1"/>
</dbReference>
<dbReference type="SUPFAM" id="SSF52151">
    <property type="entry name" value="FabD/lysophospholipase-like"/>
    <property type="match status" value="1"/>
</dbReference>
<dbReference type="PROSITE" id="PS51635">
    <property type="entry name" value="PNPLA"/>
    <property type="match status" value="1"/>
</dbReference>
<evidence type="ECO:0000250" key="1"/>
<evidence type="ECO:0000255" key="2"/>
<evidence type="ECO:0000255" key="3">
    <source>
        <dbReference type="PROSITE-ProRule" id="PRU01161"/>
    </source>
</evidence>
<evidence type="ECO:0000269" key="4">
    <source>
    </source>
</evidence>
<evidence type="ECO:0000305" key="5"/>
<feature type="signal peptide" evidence="2">
    <location>
        <begin position="1"/>
        <end position="23"/>
    </location>
</feature>
<feature type="chain" id="PRO_0000296695" description="Patatin-10">
    <location>
        <begin position="24"/>
        <end position="386"/>
    </location>
</feature>
<feature type="domain" description="PNPLA" evidence="3">
    <location>
        <begin position="32"/>
        <end position="229"/>
    </location>
</feature>
<feature type="coiled-coil region" evidence="2">
    <location>
        <begin position="321"/>
        <end position="384"/>
    </location>
</feature>
<feature type="short sequence motif" description="GXGXXG" evidence="3">
    <location>
        <begin position="36"/>
        <end position="41"/>
    </location>
</feature>
<feature type="short sequence motif" description="GXSXG" evidence="3">
    <location>
        <begin position="75"/>
        <end position="79"/>
    </location>
</feature>
<feature type="short sequence motif" description="DGA/G" evidence="3">
    <location>
        <begin position="215"/>
        <end position="217"/>
    </location>
</feature>
<feature type="active site" description="Nucleophile" evidence="3">
    <location>
        <position position="77"/>
    </location>
</feature>
<feature type="active site" description="Proton acceptor" evidence="3">
    <location>
        <position position="215"/>
    </location>
</feature>
<feature type="glycosylation site" description="N-linked (GlcNAc...) asparagine" evidence="2">
    <location>
        <position position="115"/>
    </location>
</feature>
<protein>
    <recommendedName>
        <fullName>Patatin-10</fullName>
        <ecNumber>3.1.1.-</ecNumber>
    </recommendedName>
</protein>
<sequence>MATTKSFLILFFMILATTSSTCAKLEEMVTVLSIDGGGIKGIIPAIILEFLEGQLQEVDNNKDARLADYFDVIGGTSTGGLLTAMITTPNENNRPFAAAKDIVPFYFEHGPHIFNYSGSIIGPMYDGKYLLQVLQEKLGETRVHQALTEVAISSFDIKTNKPVIFTKSNLAKSPELDAKMYDICYSTAAAPIYFPPHYFITHTSNGDIYEFNLVDGGVATVGDPALLSLSVATRLAQEDPAFSSIKSLDYKQMLLLSLGTGTNSEFDKTYTAQEAAKWGPLRWMLAIQQMTNAASSYMTDYYISTVFQARHSQNNYLRVQENALTGTTTEMDDASEANMELLVQVGETLLKKPVSKDSPETYEEALKRFAKLLSNRKKLRANKASY</sequence>
<name>PAT10_SOLTU</name>
<accession>Q2MY41</accession>
<comment type="function">
    <text evidence="1">Probable lipolytic acyl hydrolase (LAH), an activity which is thought to be involved in the response of tubers to pathogens.</text>
</comment>
<comment type="subcellular location">
    <subcellularLocation>
        <location evidence="1">Vacuole</location>
    </subcellularLocation>
</comment>
<comment type="tissue specificity">
    <text evidence="4">Tuber.</text>
</comment>
<comment type="developmental stage">
    <text evidence="4">Accumulates progressively during tuber formation from stolon.</text>
</comment>
<comment type="domain">
    <text>The nitrogen atoms of the two glycine residues in the GGXR motif define the oxyanion hole, and stabilize the oxyanion that forms during the nucleophilic attack by the catalytic serine during substrate cleavage.</text>
</comment>
<comment type="miscellaneous">
    <text>Patatin have a dual role as a somatic storage protein and as an enzyme involved in host resistance.</text>
</comment>
<comment type="similarity">
    <text evidence="5">Belongs to the patatin family.</text>
</comment>
<reference key="1">
    <citation type="journal article" date="2006" name="Genetics">
        <title>Structural diversity and differential transcription of the patatin multicopy gene family during potato tuber development.</title>
        <authorList>
            <person name="Stupar R.M."/>
            <person name="Beaubien K.A."/>
            <person name="Jin W."/>
            <person name="Song J."/>
            <person name="Lee M.-K."/>
            <person name="Wu C."/>
            <person name="Zhang H.-B."/>
            <person name="Han B."/>
            <person name="Jiang J."/>
        </authorList>
    </citation>
    <scope>NUCLEOTIDE SEQUENCE [MRNA]</scope>
    <scope>DEVELOPMENTAL STAGE</scope>
    <scope>TISSUE SPECIFICITY</scope>
    <source>
        <strain>cv. Kennebec</strain>
    </source>
</reference>
<keyword id="KW-0175">Coiled coil</keyword>
<keyword id="KW-0325">Glycoprotein</keyword>
<keyword id="KW-0378">Hydrolase</keyword>
<keyword id="KW-0442">Lipid degradation</keyword>
<keyword id="KW-0443">Lipid metabolism</keyword>
<keyword id="KW-0611">Plant defense</keyword>
<keyword id="KW-1185">Reference proteome</keyword>
<keyword id="KW-0732">Signal</keyword>
<keyword id="KW-0758">Storage protein</keyword>
<keyword id="KW-0926">Vacuole</keyword>
<organism>
    <name type="scientific">Solanum tuberosum</name>
    <name type="common">Potato</name>
    <dbReference type="NCBI Taxonomy" id="4113"/>
    <lineage>
        <taxon>Eukaryota</taxon>
        <taxon>Viridiplantae</taxon>
        <taxon>Streptophyta</taxon>
        <taxon>Embryophyta</taxon>
        <taxon>Tracheophyta</taxon>
        <taxon>Spermatophyta</taxon>
        <taxon>Magnoliopsida</taxon>
        <taxon>eudicotyledons</taxon>
        <taxon>Gunneridae</taxon>
        <taxon>Pentapetalae</taxon>
        <taxon>asterids</taxon>
        <taxon>lamiids</taxon>
        <taxon>Solanales</taxon>
        <taxon>Solanaceae</taxon>
        <taxon>Solanoideae</taxon>
        <taxon>Solaneae</taxon>
        <taxon>Solanum</taxon>
    </lineage>
</organism>
<proteinExistence type="evidence at transcript level"/>